<sequence>MAARGRRAEPQGREAPGPAGGGGGGSRWAESGSGTSPESGDEEVSGAGSSPVSGGVNLFANDGSFLELFKRKMEEEQRQRQEEPPPGPQRPDQSAAAAGPGDPKRKGGPGSTLSFVGKRRGGNKLALKTGIVAKKQKTEDEVLTSKGDAWAKYMAEVKKYKAHQCGDDDKTRPLVK</sequence>
<keyword id="KW-0007">Acetylation</keyword>
<keyword id="KW-0269">Exonuclease</keyword>
<keyword id="KW-0378">Hydrolase</keyword>
<keyword id="KW-0540">Nuclease</keyword>
<keyword id="KW-1267">Proteomics identification</keyword>
<keyword id="KW-1185">Reference proteome</keyword>
<keyword id="KW-0694">RNA-binding</keyword>
<reference key="1">
    <citation type="journal article" date="2004" name="Genome Res.">
        <title>The status, quality, and expansion of the NIH full-length cDNA project: the Mammalian Gene Collection (MGC).</title>
        <authorList>
            <consortium name="The MGC Project Team"/>
        </authorList>
    </citation>
    <scope>NUCLEOTIDE SEQUENCE [LARGE SCALE MRNA]</scope>
    <source>
        <tissue>Brain</tissue>
        <tissue>Muscle</tissue>
        <tissue>Placenta</tissue>
    </source>
</reference>
<reference key="2">
    <citation type="journal article" date="2009" name="Science">
        <title>Lysine acetylation targets protein complexes and co-regulates major cellular functions.</title>
        <authorList>
            <person name="Choudhary C."/>
            <person name="Kumar C."/>
            <person name="Gnad F."/>
            <person name="Nielsen M.L."/>
            <person name="Rehman M."/>
            <person name="Walther T.C."/>
            <person name="Olsen J.V."/>
            <person name="Mann M."/>
        </authorList>
    </citation>
    <scope>ACETYLATION [LARGE SCALE ANALYSIS] AT LYS-146</scope>
    <scope>IDENTIFICATION BY MASS SPECTROMETRY [LARGE SCALE ANALYSIS]</scope>
</reference>
<reference key="3">
    <citation type="journal article" date="2011" name="BMC Syst. Biol.">
        <title>Initial characterization of the human central proteome.</title>
        <authorList>
            <person name="Burkard T.R."/>
            <person name="Planyavsky M."/>
            <person name="Kaupe I."/>
            <person name="Breitwieser F.P."/>
            <person name="Buerckstuemmer T."/>
            <person name="Bennett K.L."/>
            <person name="Superti-Furga G."/>
            <person name="Colinge J."/>
        </authorList>
    </citation>
    <scope>IDENTIFICATION BY MASS SPECTROMETRY [LARGE SCALE ANALYSIS]</scope>
</reference>
<reference key="4">
    <citation type="journal article" date="2013" name="J. Proteome Res.">
        <title>Toward a comprehensive characterization of a human cancer cell phosphoproteome.</title>
        <authorList>
            <person name="Zhou H."/>
            <person name="Di Palma S."/>
            <person name="Preisinger C."/>
            <person name="Peng M."/>
            <person name="Polat A.N."/>
            <person name="Heck A.J."/>
            <person name="Mohammed S."/>
        </authorList>
    </citation>
    <scope>IDENTIFICATION BY MASS SPECTROMETRY [LARGE SCALE ANALYSIS]</scope>
    <source>
        <tissue>Cervix carcinoma</tissue>
        <tissue>Erythroleukemia</tissue>
    </source>
</reference>
<reference key="5">
    <citation type="journal article" date="2017" name="Sci. Rep.">
        <title>Identification of an RNase that preferentially cleaves A/G nucleotides.</title>
        <authorList>
            <person name="Xie J."/>
            <person name="Chen Z."/>
            <person name="Zhang X."/>
            <person name="Chen H."/>
            <person name="Guan W."/>
        </authorList>
    </citation>
    <scope>IDENTIFICATION IN THE TELOMERASE RNA 3' END PROCESSING COMPLEX</scope>
    <scope>FUNCTION</scope>
    <scope>CATALYTIC ACTIVITY</scope>
    <scope>BIOPHYSICOCHEMICAL PROPERTIES</scope>
    <scope>ACTIVITY REGULATION</scope>
    <scope>DOMAIN</scope>
</reference>
<protein>
    <recommendedName>
        <fullName evidence="3 5">Telomerase RNA component interacting RNase</fullName>
        <ecNumber evidence="2">3.1.13.-</ecNumber>
    </recommendedName>
    <alternativeName>
        <fullName evidence="4">Exoribonuclease TRIR</fullName>
    </alternativeName>
</protein>
<name>TRIR_HUMAN</name>
<comment type="function">
    <text evidence="2">Exoribonuclease that is part of the telomerase RNA 3' end processing complex and which has the ability to cleave all four unpaired RNA nucleotides from the 5' end or 3' end with higher efficiency for purine bases (PubMed:28322335).</text>
</comment>
<comment type="activity regulation">
    <text evidence="2">Zn(2+) inhibits the RNase activity while Mg(2+), Ca(2+), Mn(2+), K(+), Na(+), EDTA and EGTA show little effect on the exoribonuclease activity (PubMed:28322335).</text>
</comment>
<comment type="biophysicochemical properties">
    <phDependence>
        <text evidence="2">Optimum pH is 6.5-12.</text>
    </phDependence>
    <temperatureDependence>
        <text evidence="2">Optimum temperature is 37-75 degrees Celsius.</text>
    </temperatureDependence>
</comment>
<comment type="subunit">
    <text evidence="2">Part of the telomerase RNA 3' end complex which contains about 488 proteins (PubMed:28322335).</text>
</comment>
<comment type="interaction">
    <interactant intactId="EBI-744881">
        <id>Q9BQ61</id>
    </interactant>
    <interactant intactId="EBI-607085">
        <id>P09012</id>
        <label>SNRPA</label>
    </interactant>
    <organismsDiffer>false</organismsDiffer>
    <experiments>10</experiments>
</comment>
<comment type="domain">
    <text evidence="2">The C-terminus contains a key domain which is responsible for the RNA digestion activity (PubMed:28322335).</text>
</comment>
<dbReference type="EC" id="3.1.13.-" evidence="2"/>
<dbReference type="EMBL" id="BC000216">
    <property type="protein sequence ID" value="AAH00216.1"/>
    <property type="molecule type" value="mRNA"/>
</dbReference>
<dbReference type="EMBL" id="BC004533">
    <property type="protein sequence ID" value="AAH04533.1"/>
    <property type="molecule type" value="mRNA"/>
</dbReference>
<dbReference type="EMBL" id="BC015347">
    <property type="protein sequence ID" value="AAH15347.1"/>
    <property type="molecule type" value="mRNA"/>
</dbReference>
<dbReference type="CCDS" id="CCDS12279.1"/>
<dbReference type="RefSeq" id="NP_001316667.1">
    <property type="nucleotide sequence ID" value="NM_001329738.1"/>
</dbReference>
<dbReference type="RefSeq" id="NP_076943.1">
    <property type="nucleotide sequence ID" value="NM_024038.4"/>
</dbReference>
<dbReference type="SMR" id="Q9BQ61"/>
<dbReference type="BioGRID" id="122473">
    <property type="interactions" value="62"/>
</dbReference>
<dbReference type="CORUM" id="Q9BQ61"/>
<dbReference type="FunCoup" id="Q9BQ61">
    <property type="interactions" value="1074"/>
</dbReference>
<dbReference type="IntAct" id="Q9BQ61">
    <property type="interactions" value="36"/>
</dbReference>
<dbReference type="MINT" id="Q9BQ61"/>
<dbReference type="STRING" id="9606.ENSP00000242784"/>
<dbReference type="GlyGen" id="Q9BQ61">
    <property type="glycosylation" value="1 site, 1 O-linked glycan (1 site)"/>
</dbReference>
<dbReference type="iPTMnet" id="Q9BQ61"/>
<dbReference type="PhosphoSitePlus" id="Q9BQ61"/>
<dbReference type="BioMuta" id="TRIR"/>
<dbReference type="DMDM" id="74732813"/>
<dbReference type="jPOST" id="Q9BQ61"/>
<dbReference type="MassIVE" id="Q9BQ61"/>
<dbReference type="PaxDb" id="9606-ENSP00000242784"/>
<dbReference type="PeptideAtlas" id="Q9BQ61"/>
<dbReference type="ProteomicsDB" id="78631"/>
<dbReference type="Pumba" id="Q9BQ61"/>
<dbReference type="TopDownProteomics" id="Q9BQ61"/>
<dbReference type="Antibodypedia" id="26146">
    <property type="antibodies" value="32 antibodies from 15 providers"/>
</dbReference>
<dbReference type="DNASU" id="79002"/>
<dbReference type="Ensembl" id="ENST00000242784.5">
    <property type="protein sequence ID" value="ENSP00000242784.3"/>
    <property type="gene ID" value="ENSG00000123144.11"/>
</dbReference>
<dbReference type="GeneID" id="79002"/>
<dbReference type="KEGG" id="hsa:79002"/>
<dbReference type="MANE-Select" id="ENST00000242784.5">
    <property type="protein sequence ID" value="ENSP00000242784.3"/>
    <property type="RefSeq nucleotide sequence ID" value="NM_024038.4"/>
    <property type="RefSeq protein sequence ID" value="NP_076943.1"/>
</dbReference>
<dbReference type="UCSC" id="uc002muu.4">
    <property type="organism name" value="human"/>
</dbReference>
<dbReference type="AGR" id="HGNC:28424"/>
<dbReference type="CTD" id="79002"/>
<dbReference type="GeneCards" id="TRIR"/>
<dbReference type="HGNC" id="HGNC:28424">
    <property type="gene designation" value="TRIR"/>
</dbReference>
<dbReference type="HPA" id="ENSG00000123144">
    <property type="expression patterns" value="Low tissue specificity"/>
</dbReference>
<dbReference type="neXtProt" id="NX_Q9BQ61"/>
<dbReference type="OpenTargets" id="ENSG00000123144"/>
<dbReference type="PharmGKB" id="PA144596476"/>
<dbReference type="VEuPathDB" id="HostDB:ENSG00000123144"/>
<dbReference type="eggNOG" id="ENOG502S83W">
    <property type="taxonomic scope" value="Eukaryota"/>
</dbReference>
<dbReference type="GeneTree" id="ENSGT00390000012267"/>
<dbReference type="HOGENOM" id="CLU_126877_0_0_1"/>
<dbReference type="InParanoid" id="Q9BQ61"/>
<dbReference type="OMA" id="TNKGDAW"/>
<dbReference type="OrthoDB" id="5983145at2759"/>
<dbReference type="PAN-GO" id="Q9BQ61">
    <property type="GO annotations" value="3 GO annotations based on evolutionary models"/>
</dbReference>
<dbReference type="PhylomeDB" id="Q9BQ61"/>
<dbReference type="TreeFam" id="TF323808"/>
<dbReference type="PathwayCommons" id="Q9BQ61"/>
<dbReference type="SignaLink" id="Q9BQ61"/>
<dbReference type="BioGRID-ORCS" id="79002">
    <property type="hits" value="134 hits in 1134 CRISPR screens"/>
</dbReference>
<dbReference type="CD-CODE" id="DEE660B4">
    <property type="entry name" value="Stress granule"/>
</dbReference>
<dbReference type="ChiTaRS" id="C19orf43">
    <property type="organism name" value="human"/>
</dbReference>
<dbReference type="GenomeRNAi" id="79002"/>
<dbReference type="Pharos" id="Q9BQ61">
    <property type="development level" value="Tdark"/>
</dbReference>
<dbReference type="PRO" id="PR:Q9BQ61"/>
<dbReference type="Proteomes" id="UP000005640">
    <property type="component" value="Chromosome 19"/>
</dbReference>
<dbReference type="RNAct" id="Q9BQ61">
    <property type="molecule type" value="protein"/>
</dbReference>
<dbReference type="Bgee" id="ENSG00000123144">
    <property type="expression patterns" value="Expressed in granulocyte and 185 other cell types or tissues"/>
</dbReference>
<dbReference type="ExpressionAtlas" id="Q9BQ61">
    <property type="expression patterns" value="baseline and differential"/>
</dbReference>
<dbReference type="GO" id="GO:0008408">
    <property type="term" value="F:3'-5' exonuclease activity"/>
    <property type="evidence" value="ECO:0000314"/>
    <property type="project" value="UniProtKB"/>
</dbReference>
<dbReference type="GO" id="GO:0008409">
    <property type="term" value="F:5'-3' exonuclease activity"/>
    <property type="evidence" value="ECO:0000314"/>
    <property type="project" value="UniProtKB"/>
</dbReference>
<dbReference type="GO" id="GO:0003723">
    <property type="term" value="F:RNA binding"/>
    <property type="evidence" value="ECO:0007669"/>
    <property type="project" value="UniProtKB-KW"/>
</dbReference>
<dbReference type="GO" id="GO:0016075">
    <property type="term" value="P:rRNA catabolic process"/>
    <property type="evidence" value="ECO:0000314"/>
    <property type="project" value="UniProtKB"/>
</dbReference>
<dbReference type="InterPro" id="IPR038838">
    <property type="entry name" value="TRIR"/>
</dbReference>
<dbReference type="PANTHER" id="PTHR34753">
    <property type="entry name" value="TELOMERASE RNA COMPONENT INTERACTING RNASE"/>
    <property type="match status" value="1"/>
</dbReference>
<dbReference type="PANTHER" id="PTHR34753:SF1">
    <property type="entry name" value="TELOMERASE RNA COMPONENT INTERACTING RNASE"/>
    <property type="match status" value="1"/>
</dbReference>
<organism>
    <name type="scientific">Homo sapiens</name>
    <name type="common">Human</name>
    <dbReference type="NCBI Taxonomy" id="9606"/>
    <lineage>
        <taxon>Eukaryota</taxon>
        <taxon>Metazoa</taxon>
        <taxon>Chordata</taxon>
        <taxon>Craniata</taxon>
        <taxon>Vertebrata</taxon>
        <taxon>Euteleostomi</taxon>
        <taxon>Mammalia</taxon>
        <taxon>Eutheria</taxon>
        <taxon>Euarchontoglires</taxon>
        <taxon>Primates</taxon>
        <taxon>Haplorrhini</taxon>
        <taxon>Catarrhini</taxon>
        <taxon>Hominidae</taxon>
        <taxon>Homo</taxon>
    </lineage>
</organism>
<accession>Q9BQ61</accession>
<feature type="chain" id="PRO_0000280762" description="Telomerase RNA component interacting RNase">
    <location>
        <begin position="1"/>
        <end position="176"/>
    </location>
</feature>
<feature type="region of interest" description="Disordered" evidence="1">
    <location>
        <begin position="1"/>
        <end position="121"/>
    </location>
</feature>
<feature type="compositionally biased region" description="Basic and acidic residues" evidence="1">
    <location>
        <begin position="1"/>
        <end position="12"/>
    </location>
</feature>
<feature type="compositionally biased region" description="Low complexity" evidence="1">
    <location>
        <begin position="45"/>
        <end position="56"/>
    </location>
</feature>
<feature type="compositionally biased region" description="Basic and acidic residues" evidence="1">
    <location>
        <begin position="68"/>
        <end position="83"/>
    </location>
</feature>
<feature type="compositionally biased region" description="Low complexity" evidence="1">
    <location>
        <begin position="90"/>
        <end position="101"/>
    </location>
</feature>
<feature type="modified residue" description="N6-acetyllysine" evidence="6">
    <location>
        <position position="146"/>
    </location>
</feature>
<gene>
    <name evidence="3 5" type="primary">TRIR</name>
    <name evidence="5" type="synonym">C19orf43</name>
</gene>
<evidence type="ECO:0000256" key="1">
    <source>
        <dbReference type="SAM" id="MobiDB-lite"/>
    </source>
</evidence>
<evidence type="ECO:0000269" key="2">
    <source>
    </source>
</evidence>
<evidence type="ECO:0000303" key="3">
    <source>
    </source>
</evidence>
<evidence type="ECO:0000305" key="4"/>
<evidence type="ECO:0000312" key="5">
    <source>
        <dbReference type="HGNC" id="HGNC:28424"/>
    </source>
</evidence>
<evidence type="ECO:0007744" key="6">
    <source>
    </source>
</evidence>
<proteinExistence type="evidence at protein level"/>